<evidence type="ECO:0000255" key="1">
    <source>
        <dbReference type="HAMAP-Rule" id="MF_01416"/>
    </source>
</evidence>
<proteinExistence type="inferred from homology"/>
<gene>
    <name evidence="1" type="primary">atpH</name>
    <name type="ordered locus">Rmag_1048</name>
</gene>
<feature type="chain" id="PRO_0000371107" description="ATP synthase subunit delta">
    <location>
        <begin position="1"/>
        <end position="183"/>
    </location>
</feature>
<dbReference type="EMBL" id="CP000488">
    <property type="protein sequence ID" value="ABL02752.1"/>
    <property type="molecule type" value="Genomic_DNA"/>
</dbReference>
<dbReference type="RefSeq" id="WP_011738377.1">
    <property type="nucleotide sequence ID" value="NC_008610.1"/>
</dbReference>
<dbReference type="SMR" id="A1AXU5"/>
<dbReference type="STRING" id="413404.Rmag_1048"/>
<dbReference type="KEGG" id="rma:Rmag_1048"/>
<dbReference type="eggNOG" id="COG0712">
    <property type="taxonomic scope" value="Bacteria"/>
</dbReference>
<dbReference type="HOGENOM" id="CLU_085114_3_0_6"/>
<dbReference type="OrthoDB" id="9816221at2"/>
<dbReference type="Proteomes" id="UP000002587">
    <property type="component" value="Chromosome"/>
</dbReference>
<dbReference type="GO" id="GO:0005886">
    <property type="term" value="C:plasma membrane"/>
    <property type="evidence" value="ECO:0007669"/>
    <property type="project" value="UniProtKB-SubCell"/>
</dbReference>
<dbReference type="GO" id="GO:0045259">
    <property type="term" value="C:proton-transporting ATP synthase complex"/>
    <property type="evidence" value="ECO:0007669"/>
    <property type="project" value="UniProtKB-KW"/>
</dbReference>
<dbReference type="GO" id="GO:0046933">
    <property type="term" value="F:proton-transporting ATP synthase activity, rotational mechanism"/>
    <property type="evidence" value="ECO:0007669"/>
    <property type="project" value="UniProtKB-UniRule"/>
</dbReference>
<dbReference type="Gene3D" id="1.10.520.20">
    <property type="entry name" value="N-terminal domain of the delta subunit of the F1F0-ATP synthase"/>
    <property type="match status" value="1"/>
</dbReference>
<dbReference type="HAMAP" id="MF_01416">
    <property type="entry name" value="ATP_synth_delta_bact"/>
    <property type="match status" value="1"/>
</dbReference>
<dbReference type="InterPro" id="IPR026015">
    <property type="entry name" value="ATP_synth_OSCP/delta_N_sf"/>
</dbReference>
<dbReference type="InterPro" id="IPR020781">
    <property type="entry name" value="ATPase_OSCP/d_CS"/>
</dbReference>
<dbReference type="InterPro" id="IPR000711">
    <property type="entry name" value="ATPase_OSCP/dsu"/>
</dbReference>
<dbReference type="NCBIfam" id="TIGR01145">
    <property type="entry name" value="ATP_synt_delta"/>
    <property type="match status" value="1"/>
</dbReference>
<dbReference type="NCBIfam" id="NF004402">
    <property type="entry name" value="PRK05758.2-2"/>
    <property type="match status" value="1"/>
</dbReference>
<dbReference type="PANTHER" id="PTHR11910">
    <property type="entry name" value="ATP SYNTHASE DELTA CHAIN"/>
    <property type="match status" value="1"/>
</dbReference>
<dbReference type="Pfam" id="PF00213">
    <property type="entry name" value="OSCP"/>
    <property type="match status" value="1"/>
</dbReference>
<dbReference type="PRINTS" id="PR00125">
    <property type="entry name" value="ATPASEDELTA"/>
</dbReference>
<dbReference type="SUPFAM" id="SSF47928">
    <property type="entry name" value="N-terminal domain of the delta subunit of the F1F0-ATP synthase"/>
    <property type="match status" value="1"/>
</dbReference>
<dbReference type="PROSITE" id="PS00389">
    <property type="entry name" value="ATPASE_DELTA"/>
    <property type="match status" value="1"/>
</dbReference>
<organism>
    <name type="scientific">Ruthia magnifica subsp. Calyptogena magnifica</name>
    <dbReference type="NCBI Taxonomy" id="413404"/>
    <lineage>
        <taxon>Bacteria</taxon>
        <taxon>Pseudomonadati</taxon>
        <taxon>Pseudomonadota</taxon>
        <taxon>Gammaproteobacteria</taxon>
        <taxon>Candidatus Pseudothioglobaceae</taxon>
        <taxon>Candidatus Ruthturnera</taxon>
    </lineage>
</organism>
<keyword id="KW-0066">ATP synthesis</keyword>
<keyword id="KW-0997">Cell inner membrane</keyword>
<keyword id="KW-1003">Cell membrane</keyword>
<keyword id="KW-0139">CF(1)</keyword>
<keyword id="KW-0375">Hydrogen ion transport</keyword>
<keyword id="KW-0406">Ion transport</keyword>
<keyword id="KW-0472">Membrane</keyword>
<keyword id="KW-0813">Transport</keyword>
<comment type="function">
    <text evidence="1">F(1)F(0) ATP synthase produces ATP from ADP in the presence of a proton or sodium gradient. F-type ATPases consist of two structural domains, F(1) containing the extramembraneous catalytic core and F(0) containing the membrane proton channel, linked together by a central stalk and a peripheral stalk. During catalysis, ATP synthesis in the catalytic domain of F(1) is coupled via a rotary mechanism of the central stalk subunits to proton translocation.</text>
</comment>
<comment type="function">
    <text evidence="1">This protein is part of the stalk that links CF(0) to CF(1). It either transmits conformational changes from CF(0) to CF(1) or is implicated in proton conduction.</text>
</comment>
<comment type="subunit">
    <text evidence="1">F-type ATPases have 2 components, F(1) - the catalytic core - and F(0) - the membrane proton channel. F(1) has five subunits: alpha(3), beta(3), gamma(1), delta(1), epsilon(1). F(0) has three main subunits: a(1), b(2) and c(10-14). The alpha and beta chains form an alternating ring which encloses part of the gamma chain. F(1) is attached to F(0) by a central stalk formed by the gamma and epsilon chains, while a peripheral stalk is formed by the delta and b chains.</text>
</comment>
<comment type="subcellular location">
    <subcellularLocation>
        <location evidence="1">Cell inner membrane</location>
        <topology evidence="1">Peripheral membrane protein</topology>
    </subcellularLocation>
</comment>
<comment type="similarity">
    <text evidence="1">Belongs to the ATPase delta chain family.</text>
</comment>
<name>ATPD_RUTMC</name>
<sequence>MELVVIAKPYANAIFELAQQDKSYLQWKMVLDAGAQLLIDEQMCKFIAFPNVLKQDKLSVIKELLKSILARELSGHEVTFIGILLNNNRINALPSIATLFESLINTTNDAKMFNVISAYQLSELEKKQIVRDLTNQYNKVVNIDAVIDKDLVGGVIIKDGDKVIDMSIKARVNELELRLSKTH</sequence>
<reference key="1">
    <citation type="journal article" date="2007" name="Science">
        <title>The Calyptogena magnifica chemoautotrophic symbiont genome.</title>
        <authorList>
            <person name="Newton I.L.G."/>
            <person name="Woyke T."/>
            <person name="Auchtung T.A."/>
            <person name="Dilly G.F."/>
            <person name="Dutton R.J."/>
            <person name="Fisher M.C."/>
            <person name="Fontanez K.M."/>
            <person name="Lau E."/>
            <person name="Stewart F.J."/>
            <person name="Richardson P.M."/>
            <person name="Barry K.W."/>
            <person name="Saunders E."/>
            <person name="Detter J.C."/>
            <person name="Wu D."/>
            <person name="Eisen J.A."/>
            <person name="Cavanaugh C.M."/>
        </authorList>
    </citation>
    <scope>NUCLEOTIDE SEQUENCE [LARGE SCALE GENOMIC DNA]</scope>
</reference>
<protein>
    <recommendedName>
        <fullName evidence="1">ATP synthase subunit delta</fullName>
    </recommendedName>
    <alternativeName>
        <fullName evidence="1">ATP synthase F(1) sector subunit delta</fullName>
    </alternativeName>
    <alternativeName>
        <fullName evidence="1">F-type ATPase subunit delta</fullName>
        <shortName evidence="1">F-ATPase subunit delta</shortName>
    </alternativeName>
</protein>
<accession>A1AXU5</accession>